<protein>
    <recommendedName>
        <fullName evidence="1">1-aminocyclopropane-1-carboxylate deaminase</fullName>
        <shortName evidence="1">ACC deaminase</shortName>
        <shortName evidence="1">ACCD</shortName>
        <ecNumber evidence="1">3.5.99.7</ecNumber>
    </recommendedName>
</protein>
<feature type="chain" id="PRO_0000184506" description="1-aminocyclopropane-1-carboxylate deaminase">
    <location>
        <begin position="1"/>
        <end position="338"/>
    </location>
</feature>
<feature type="active site" description="Nucleophile" evidence="1">
    <location>
        <position position="78"/>
    </location>
</feature>
<feature type="modified residue" description="N6-(pyridoxal phosphate)lysine" evidence="1">
    <location>
        <position position="51"/>
    </location>
</feature>
<proteinExistence type="inferred from homology"/>
<comment type="function">
    <text evidence="1">Catalyzes a cyclopropane ring-opening reaction, the irreversible conversion of 1-aminocyclopropane-1-carboxylate (ACC) to ammonia and alpha-ketobutyrate. Allows growth on ACC as a nitrogen source.</text>
</comment>
<comment type="catalytic activity">
    <reaction evidence="1">
        <text>1-aminocyclopropane-1-carboxylate + H2O = 2-oxobutanoate + NH4(+)</text>
        <dbReference type="Rhea" id="RHEA:16933"/>
        <dbReference type="ChEBI" id="CHEBI:15377"/>
        <dbReference type="ChEBI" id="CHEBI:16763"/>
        <dbReference type="ChEBI" id="CHEBI:28938"/>
        <dbReference type="ChEBI" id="CHEBI:58360"/>
        <dbReference type="EC" id="3.5.99.7"/>
    </reaction>
</comment>
<comment type="cofactor">
    <cofactor evidence="1">
        <name>pyridoxal 5'-phosphate</name>
        <dbReference type="ChEBI" id="CHEBI:597326"/>
    </cofactor>
</comment>
<comment type="subunit">
    <text evidence="1">Homotrimer.</text>
</comment>
<comment type="similarity">
    <text evidence="1">Belongs to the ACC deaminase/D-cysteine desulfhydrase family.</text>
</comment>
<geneLocation type="plasmid">
    <name>megaplasmid Rsp</name>
</geneLocation>
<dbReference type="EC" id="3.5.99.7" evidence="1"/>
<dbReference type="EMBL" id="AL646053">
    <property type="protein sequence ID" value="CAD17797.1"/>
    <property type="molecule type" value="Genomic_DNA"/>
</dbReference>
<dbReference type="RefSeq" id="WP_011003944.1">
    <property type="nucleotide sequence ID" value="NC_003296.1"/>
</dbReference>
<dbReference type="SMR" id="Q8XS35"/>
<dbReference type="STRING" id="267608.RSp0646"/>
<dbReference type="EnsemblBacteria" id="CAD17797">
    <property type="protein sequence ID" value="CAD17797"/>
    <property type="gene ID" value="RSp0646"/>
</dbReference>
<dbReference type="KEGG" id="rso:RSp0646"/>
<dbReference type="PATRIC" id="fig|267608.8.peg.4117"/>
<dbReference type="eggNOG" id="COG2515">
    <property type="taxonomic scope" value="Bacteria"/>
</dbReference>
<dbReference type="HOGENOM" id="CLU_048897_2_1_4"/>
<dbReference type="Proteomes" id="UP000001436">
    <property type="component" value="Plasmid megaplasmid Rsp"/>
</dbReference>
<dbReference type="GO" id="GO:0008660">
    <property type="term" value="F:1-aminocyclopropane-1-carboxylate deaminase activity"/>
    <property type="evidence" value="ECO:0007669"/>
    <property type="project" value="UniProtKB-UniRule"/>
</dbReference>
<dbReference type="GO" id="GO:0019148">
    <property type="term" value="F:D-cysteine desulfhydrase activity"/>
    <property type="evidence" value="ECO:0007669"/>
    <property type="project" value="TreeGrafter"/>
</dbReference>
<dbReference type="GO" id="GO:0030170">
    <property type="term" value="F:pyridoxal phosphate binding"/>
    <property type="evidence" value="ECO:0007669"/>
    <property type="project" value="InterPro"/>
</dbReference>
<dbReference type="GO" id="GO:0018871">
    <property type="term" value="P:1-aminocyclopropane-1-carboxylate metabolic process"/>
    <property type="evidence" value="ECO:0007669"/>
    <property type="project" value="UniProtKB-UniRule"/>
</dbReference>
<dbReference type="GO" id="GO:0009310">
    <property type="term" value="P:amine catabolic process"/>
    <property type="evidence" value="ECO:0007669"/>
    <property type="project" value="InterPro"/>
</dbReference>
<dbReference type="CDD" id="cd06449">
    <property type="entry name" value="ACCD"/>
    <property type="match status" value="1"/>
</dbReference>
<dbReference type="FunFam" id="3.40.50.1100:FF:000048">
    <property type="entry name" value="1-aminocyclopropane-1-carboxylate deaminase"/>
    <property type="match status" value="1"/>
</dbReference>
<dbReference type="FunFam" id="3.40.50.1100:FF:000053">
    <property type="entry name" value="1-aminocyclopropane-1-carboxylate deaminase"/>
    <property type="match status" value="1"/>
</dbReference>
<dbReference type="Gene3D" id="3.40.50.1100">
    <property type="match status" value="2"/>
</dbReference>
<dbReference type="HAMAP" id="MF_00807">
    <property type="entry name" value="ACC_deaminase"/>
    <property type="match status" value="1"/>
</dbReference>
<dbReference type="InterPro" id="IPR027278">
    <property type="entry name" value="ACCD_DCysDesulf"/>
</dbReference>
<dbReference type="InterPro" id="IPR005965">
    <property type="entry name" value="ACP_carboxylate_deaminase"/>
</dbReference>
<dbReference type="InterPro" id="IPR020601">
    <property type="entry name" value="ACP_carboxylate_deaminase_bac"/>
</dbReference>
<dbReference type="InterPro" id="IPR001926">
    <property type="entry name" value="TrpB-like_PALP"/>
</dbReference>
<dbReference type="InterPro" id="IPR036052">
    <property type="entry name" value="TrpB-like_PALP_sf"/>
</dbReference>
<dbReference type="NCBIfam" id="TIGR01274">
    <property type="entry name" value="ACC_deam"/>
    <property type="match status" value="1"/>
</dbReference>
<dbReference type="PANTHER" id="PTHR43780">
    <property type="entry name" value="1-AMINOCYCLOPROPANE-1-CARBOXYLATE DEAMINASE-RELATED"/>
    <property type="match status" value="1"/>
</dbReference>
<dbReference type="PANTHER" id="PTHR43780:SF2">
    <property type="entry name" value="1-AMINOCYCLOPROPANE-1-CARBOXYLATE DEAMINASE-RELATED"/>
    <property type="match status" value="1"/>
</dbReference>
<dbReference type="Pfam" id="PF00291">
    <property type="entry name" value="PALP"/>
    <property type="match status" value="1"/>
</dbReference>
<dbReference type="PIRSF" id="PIRSF006278">
    <property type="entry name" value="ACCD_DCysDesulf"/>
    <property type="match status" value="1"/>
</dbReference>
<dbReference type="SUPFAM" id="SSF53686">
    <property type="entry name" value="Tryptophan synthase beta subunit-like PLP-dependent enzymes"/>
    <property type="match status" value="1"/>
</dbReference>
<gene>
    <name evidence="1" type="primary">acdS</name>
    <name type="ordered locus">RSp0646</name>
    <name type="ORF">RS05576</name>
</gene>
<evidence type="ECO:0000255" key="1">
    <source>
        <dbReference type="HAMAP-Rule" id="MF_00807"/>
    </source>
</evidence>
<accession>Q8XS35</accession>
<sequence>MNLNKHPRHPLTFGPTPIQPLKRLSAHLGGKVELYAKREDCNSGLAFGGNKTRKLEYLVPEVLAGGYDTLVSIGGIQSNQTRQVAAVAAHLGLKCVLVQENWVNYADAVYDRVGNIELSRILGADVRLDAAGFDIGIRPSWEQAMEDVRRAGGKPFPIPAGCSEHPLGGLGFVGFAEEVRQQEAEFGFRFDYIVVCSVTGSTQAGMVVGFAADGRADRVIGIDASAKPEQTREQILRIARDTAKLVELGRDITEDDVVLDTRYGGPEYGLPNEGTLEAIRLCARQEGMLTDPVYEGKSMHGMIDRVRGGEFPEGSRVLYAHLGGVPALNAYSFLFRNG</sequence>
<keyword id="KW-0378">Hydrolase</keyword>
<keyword id="KW-0614">Plasmid</keyword>
<keyword id="KW-0663">Pyridoxal phosphate</keyword>
<keyword id="KW-1185">Reference proteome</keyword>
<organism>
    <name type="scientific">Ralstonia nicotianae (strain ATCC BAA-1114 / GMI1000)</name>
    <name type="common">Ralstonia solanacearum</name>
    <dbReference type="NCBI Taxonomy" id="267608"/>
    <lineage>
        <taxon>Bacteria</taxon>
        <taxon>Pseudomonadati</taxon>
        <taxon>Pseudomonadota</taxon>
        <taxon>Betaproteobacteria</taxon>
        <taxon>Burkholderiales</taxon>
        <taxon>Burkholderiaceae</taxon>
        <taxon>Ralstonia</taxon>
        <taxon>Ralstonia solanacearum species complex</taxon>
    </lineage>
</organism>
<name>1A1D_RALN1</name>
<reference key="1">
    <citation type="journal article" date="2002" name="Nature">
        <title>Genome sequence of the plant pathogen Ralstonia solanacearum.</title>
        <authorList>
            <person name="Salanoubat M."/>
            <person name="Genin S."/>
            <person name="Artiguenave F."/>
            <person name="Gouzy J."/>
            <person name="Mangenot S."/>
            <person name="Arlat M."/>
            <person name="Billault A."/>
            <person name="Brottier P."/>
            <person name="Camus J.-C."/>
            <person name="Cattolico L."/>
            <person name="Chandler M."/>
            <person name="Choisne N."/>
            <person name="Claudel-Renard C."/>
            <person name="Cunnac S."/>
            <person name="Demange N."/>
            <person name="Gaspin C."/>
            <person name="Lavie M."/>
            <person name="Moisan A."/>
            <person name="Robert C."/>
            <person name="Saurin W."/>
            <person name="Schiex T."/>
            <person name="Siguier P."/>
            <person name="Thebault P."/>
            <person name="Whalen M."/>
            <person name="Wincker P."/>
            <person name="Levy M."/>
            <person name="Weissenbach J."/>
            <person name="Boucher C.A."/>
        </authorList>
    </citation>
    <scope>NUCLEOTIDE SEQUENCE [LARGE SCALE GENOMIC DNA]</scope>
    <source>
        <strain>ATCC BAA-1114 / GMI1000</strain>
    </source>
</reference>